<dbReference type="EC" id="3.4.24.59"/>
<dbReference type="EMBL" id="CH408029">
    <property type="protein sequence ID" value="EAQ92751.1"/>
    <property type="molecule type" value="Genomic_DNA"/>
</dbReference>
<dbReference type="RefSeq" id="XP_001220207.1">
    <property type="nucleotide sequence ID" value="XM_001220206.1"/>
</dbReference>
<dbReference type="SMR" id="Q2HFL8"/>
<dbReference type="FunCoup" id="Q2HFL8">
    <property type="interactions" value="574"/>
</dbReference>
<dbReference type="STRING" id="306901.Q2HFL8"/>
<dbReference type="GeneID" id="4386396"/>
<dbReference type="VEuPathDB" id="FungiDB:CHGG_00986"/>
<dbReference type="eggNOG" id="KOG2090">
    <property type="taxonomic scope" value="Eukaryota"/>
</dbReference>
<dbReference type="HOGENOM" id="CLU_001805_0_0_1"/>
<dbReference type="InParanoid" id="Q2HFL8"/>
<dbReference type="OMA" id="ALMFEYM"/>
<dbReference type="OrthoDB" id="17530at2759"/>
<dbReference type="Proteomes" id="UP000001056">
    <property type="component" value="Unassembled WGS sequence"/>
</dbReference>
<dbReference type="GO" id="GO:0005759">
    <property type="term" value="C:mitochondrial matrix"/>
    <property type="evidence" value="ECO:0007669"/>
    <property type="project" value="UniProtKB-SubCell"/>
</dbReference>
<dbReference type="GO" id="GO:0046872">
    <property type="term" value="F:metal ion binding"/>
    <property type="evidence" value="ECO:0007669"/>
    <property type="project" value="UniProtKB-KW"/>
</dbReference>
<dbReference type="GO" id="GO:0004222">
    <property type="term" value="F:metalloendopeptidase activity"/>
    <property type="evidence" value="ECO:0007669"/>
    <property type="project" value="UniProtKB-EC"/>
</dbReference>
<dbReference type="GO" id="GO:0006518">
    <property type="term" value="P:peptide metabolic process"/>
    <property type="evidence" value="ECO:0007669"/>
    <property type="project" value="TreeGrafter"/>
</dbReference>
<dbReference type="GO" id="GO:0006627">
    <property type="term" value="P:protein processing involved in protein targeting to mitochondrion"/>
    <property type="evidence" value="ECO:0007669"/>
    <property type="project" value="TreeGrafter"/>
</dbReference>
<dbReference type="CDD" id="cd06457">
    <property type="entry name" value="M3A_MIP"/>
    <property type="match status" value="1"/>
</dbReference>
<dbReference type="Gene3D" id="3.40.390.10">
    <property type="entry name" value="Collagenase (Catalytic Domain)"/>
    <property type="match status" value="1"/>
</dbReference>
<dbReference type="Gene3D" id="1.10.1370.10">
    <property type="entry name" value="Neurolysin, domain 3"/>
    <property type="match status" value="1"/>
</dbReference>
<dbReference type="InterPro" id="IPR033851">
    <property type="entry name" value="M3A_MIP"/>
</dbReference>
<dbReference type="InterPro" id="IPR024079">
    <property type="entry name" value="MetalloPept_cat_dom_sf"/>
</dbReference>
<dbReference type="InterPro" id="IPR024077">
    <property type="entry name" value="Neurolysin/TOP_dom2"/>
</dbReference>
<dbReference type="InterPro" id="IPR045090">
    <property type="entry name" value="Pept_M3A_M3B"/>
</dbReference>
<dbReference type="InterPro" id="IPR001567">
    <property type="entry name" value="Pept_M3A_M3B_dom"/>
</dbReference>
<dbReference type="PANTHER" id="PTHR11804:SF79">
    <property type="entry name" value="MITOCHONDRIAL INTERMEDIATE PEPTIDASE"/>
    <property type="match status" value="1"/>
</dbReference>
<dbReference type="PANTHER" id="PTHR11804">
    <property type="entry name" value="PROTEASE M3 THIMET OLIGOPEPTIDASE-RELATED"/>
    <property type="match status" value="1"/>
</dbReference>
<dbReference type="Pfam" id="PF01432">
    <property type="entry name" value="Peptidase_M3"/>
    <property type="match status" value="1"/>
</dbReference>
<dbReference type="SUPFAM" id="SSF55486">
    <property type="entry name" value="Metalloproteases ('zincins'), catalytic domain"/>
    <property type="match status" value="1"/>
</dbReference>
<dbReference type="PROSITE" id="PS00142">
    <property type="entry name" value="ZINC_PROTEASE"/>
    <property type="match status" value="1"/>
</dbReference>
<proteinExistence type="inferred from homology"/>
<sequence>MIRTVTRPRQWQRWVYSSCLLQRAVPPAAARQQPRFTTSHKANHFGYHQPIAPVTHAPITREDDFVLRSVFDYPQFWQDFTSVPGGIPVGLFRNSFLKEPRGMLTFAYVSLKKARAVVAKVLAASSVTEYRLIVRDLDRLSDILCRVLDMADFVRVTHPDPEIQQNASKAWESVYEYMNELNTMTGLHDQLATAMANPDVTVVWSEEEKTVAEVLKLDFTKSAVSLPQKYRDRFVQLSSEISAVGSAFVQEMAPEQETVVLPSSDLRGMDPVRARDLTRRGKVYLPTLSGEAVMALRTVHDADARKHIFYASRTASRRSVQMLEYLMRLRSELASLSGFESYGHLALRDRMMAKSPEAVDQFLRALVESNRPKAMQEMAELLAEKQKAYPQTNSLDPWDKDYYSDIIRRPLRVAGRQGDLLSSYFSLGVPLVGETWHPDVRRLDVVSDTDGHVAVLYCDLFTRPNKSPNPAHFTLRCSREIFASEMEEVWEQTQQSNQKSMFGSPELAATDGMTFSRHGDSIKQLPTIALVCDFPQPSKHGDQPALLSFLQLETLFHEMGHAIHSVLARTSFQTVAGTRCATDLAELPSTLMEFFAADAAVLGQFARHHETNEPLPYRMVAQKARQTRRFEALDTENQIVTAMFDQALHSPRAGEPGFDPTAIFHALQRTHSCAPPDPPGTSWPGFFGHLSGYGSVYYSYLFDRVLAQRVWDVVFKAGERRAALSRENGEKLKQSLLKWGGARDPWKCLAEALDDDRLAEGGEEAMALVGSWGSTKPR</sequence>
<feature type="transit peptide" description="Mitochondrion" evidence="2">
    <location>
        <begin position="1"/>
        <end position="37"/>
    </location>
</feature>
<feature type="chain" id="PRO_0000338578" description="Mitochondrial intermediate peptidase">
    <location>
        <begin position="38"/>
        <end position="778"/>
    </location>
</feature>
<feature type="active site" evidence="3">
    <location>
        <position position="558"/>
    </location>
</feature>
<feature type="binding site" evidence="3">
    <location>
        <position position="557"/>
    </location>
    <ligand>
        <name>Zn(2+)</name>
        <dbReference type="ChEBI" id="CHEBI:29105"/>
        <note>catalytic</note>
    </ligand>
</feature>
<feature type="binding site" evidence="3">
    <location>
        <position position="561"/>
    </location>
    <ligand>
        <name>Zn(2+)</name>
        <dbReference type="ChEBI" id="CHEBI:29105"/>
        <note>catalytic</note>
    </ligand>
</feature>
<feature type="binding site" evidence="3">
    <location>
        <position position="564"/>
    </location>
    <ligand>
        <name>Zn(2+)</name>
        <dbReference type="ChEBI" id="CHEBI:29105"/>
        <note>catalytic</note>
    </ligand>
</feature>
<keyword id="KW-0378">Hydrolase</keyword>
<keyword id="KW-0479">Metal-binding</keyword>
<keyword id="KW-0482">Metalloprotease</keyword>
<keyword id="KW-0496">Mitochondrion</keyword>
<keyword id="KW-0645">Protease</keyword>
<keyword id="KW-1185">Reference proteome</keyword>
<keyword id="KW-0809">Transit peptide</keyword>
<keyword id="KW-0862">Zinc</keyword>
<organism>
    <name type="scientific">Chaetomium globosum (strain ATCC 6205 / CBS 148.51 / DSM 1962 / NBRC 6347 / NRRL 1970)</name>
    <name type="common">Soil fungus</name>
    <dbReference type="NCBI Taxonomy" id="306901"/>
    <lineage>
        <taxon>Eukaryota</taxon>
        <taxon>Fungi</taxon>
        <taxon>Dikarya</taxon>
        <taxon>Ascomycota</taxon>
        <taxon>Pezizomycotina</taxon>
        <taxon>Sordariomycetes</taxon>
        <taxon>Sordariomycetidae</taxon>
        <taxon>Sordariales</taxon>
        <taxon>Chaetomiaceae</taxon>
        <taxon>Chaetomium</taxon>
    </lineage>
</organism>
<protein>
    <recommendedName>
        <fullName>Mitochondrial intermediate peptidase</fullName>
        <shortName>MIP</shortName>
        <ecNumber>3.4.24.59</ecNumber>
    </recommendedName>
    <alternativeName>
        <fullName>Octapeptidyl aminopeptidase</fullName>
    </alternativeName>
</protein>
<reference key="1">
    <citation type="journal article" date="2015" name="Genome Announc.">
        <title>Draft genome sequence of the cellulolytic fungus Chaetomium globosum.</title>
        <authorList>
            <person name="Cuomo C.A."/>
            <person name="Untereiner W.A."/>
            <person name="Ma L.-J."/>
            <person name="Grabherr M."/>
            <person name="Birren B.W."/>
        </authorList>
    </citation>
    <scope>NUCLEOTIDE SEQUENCE [LARGE SCALE GENOMIC DNA]</scope>
    <source>
        <strain>ATCC 6205 / CBS 148.51 / DSM 1962 / NBRC 6347 / NRRL 1970</strain>
    </source>
</reference>
<accession>Q2HFL8</accession>
<evidence type="ECO:0000250" key="1"/>
<evidence type="ECO:0000255" key="2"/>
<evidence type="ECO:0000255" key="3">
    <source>
        <dbReference type="PROSITE-ProRule" id="PRU10095"/>
    </source>
</evidence>
<evidence type="ECO:0000305" key="4"/>
<name>PMIP_CHAGB</name>
<gene>
    <name type="primary">OCT1</name>
    <name type="ORF">CHGG_00986</name>
</gene>
<comment type="function">
    <text evidence="1">Cleaves proteins, imported into the mitochondrion, to their mature size. While most mitochondrial precursor proteins are processed to the mature form in one step by mitochondrial processing peptidase (MPP), the sequential cleavage by MIP of an octapeptide after initial processing by MPP is a required step for a subgroup of nuclear-encoded precursor proteins destined for the matrix or the inner membrane (By similarity).</text>
</comment>
<comment type="catalytic activity">
    <reaction>
        <text>Release of an N-terminal octapeptide as second stage of processing of some proteins imported into the mitochondrion.</text>
        <dbReference type="EC" id="3.4.24.59"/>
    </reaction>
</comment>
<comment type="cofactor">
    <cofactor evidence="1">
        <name>Zn(2+)</name>
        <dbReference type="ChEBI" id="CHEBI:29105"/>
    </cofactor>
    <text evidence="1">Binds 1 zinc ion.</text>
</comment>
<comment type="subcellular location">
    <subcellularLocation>
        <location evidence="1">Mitochondrion matrix</location>
    </subcellularLocation>
</comment>
<comment type="similarity">
    <text evidence="4">Belongs to the peptidase M3 family.</text>
</comment>